<gene>
    <name evidence="1" type="primary">lspA</name>
    <name type="ordered locus">tlr2420</name>
</gene>
<feature type="chain" id="PRO_0000289450" description="Lipoprotein signal peptidase">
    <location>
        <begin position="1"/>
        <end position="158"/>
    </location>
</feature>
<feature type="transmembrane region" description="Helical" evidence="1">
    <location>
        <begin position="12"/>
        <end position="32"/>
    </location>
</feature>
<feature type="transmembrane region" description="Helical" evidence="1">
    <location>
        <begin position="46"/>
        <end position="66"/>
    </location>
</feature>
<feature type="transmembrane region" description="Helical" evidence="1">
    <location>
        <begin position="71"/>
        <end position="91"/>
    </location>
</feature>
<feature type="transmembrane region" description="Helical" evidence="1">
    <location>
        <begin position="135"/>
        <end position="155"/>
    </location>
</feature>
<feature type="active site" evidence="1">
    <location>
        <position position="124"/>
    </location>
</feature>
<feature type="active site" evidence="1">
    <location>
        <position position="140"/>
    </location>
</feature>
<accession>Q8DGA3</accession>
<evidence type="ECO:0000255" key="1">
    <source>
        <dbReference type="HAMAP-Rule" id="MF_00161"/>
    </source>
</evidence>
<name>LSPA_THEVB</name>
<reference key="1">
    <citation type="journal article" date="2002" name="DNA Res.">
        <title>Complete genome structure of the thermophilic cyanobacterium Thermosynechococcus elongatus BP-1.</title>
        <authorList>
            <person name="Nakamura Y."/>
            <person name="Kaneko T."/>
            <person name="Sato S."/>
            <person name="Ikeuchi M."/>
            <person name="Katoh H."/>
            <person name="Sasamoto S."/>
            <person name="Watanabe A."/>
            <person name="Iriguchi M."/>
            <person name="Kawashima K."/>
            <person name="Kimura T."/>
            <person name="Kishida Y."/>
            <person name="Kiyokawa C."/>
            <person name="Kohara M."/>
            <person name="Matsumoto M."/>
            <person name="Matsuno A."/>
            <person name="Nakazaki N."/>
            <person name="Shimpo S."/>
            <person name="Sugimoto M."/>
            <person name="Takeuchi C."/>
            <person name="Yamada M."/>
            <person name="Tabata S."/>
        </authorList>
    </citation>
    <scope>NUCLEOTIDE SEQUENCE [LARGE SCALE GENOMIC DNA]</scope>
    <source>
        <strain>NIES-2133 / IAM M-273 / BP-1</strain>
    </source>
</reference>
<protein>
    <recommendedName>
        <fullName evidence="1">Lipoprotein signal peptidase</fullName>
        <ecNumber evidence="1">3.4.23.36</ecNumber>
    </recommendedName>
    <alternativeName>
        <fullName evidence="1">Prolipoprotein signal peptidase</fullName>
    </alternativeName>
    <alternativeName>
        <fullName evidence="1">Signal peptidase II</fullName>
        <shortName evidence="1">SPase II</shortName>
    </alternativeName>
</protein>
<organism>
    <name type="scientific">Thermosynechococcus vestitus (strain NIES-2133 / IAM M-273 / BP-1)</name>
    <dbReference type="NCBI Taxonomy" id="197221"/>
    <lineage>
        <taxon>Bacteria</taxon>
        <taxon>Bacillati</taxon>
        <taxon>Cyanobacteriota</taxon>
        <taxon>Cyanophyceae</taxon>
        <taxon>Acaryochloridales</taxon>
        <taxon>Thermosynechococcaceae</taxon>
        <taxon>Thermosynechococcus</taxon>
    </lineage>
</organism>
<comment type="function">
    <text evidence="1">This protein specifically catalyzes the removal of signal peptides from prolipoproteins.</text>
</comment>
<comment type="catalytic activity">
    <reaction evidence="1">
        <text>Release of signal peptides from bacterial membrane prolipoproteins. Hydrolyzes -Xaa-Yaa-Zaa-|-(S,diacylglyceryl)Cys-, in which Xaa is hydrophobic (preferably Leu), and Yaa (Ala or Ser) and Zaa (Gly or Ala) have small, neutral side chains.</text>
        <dbReference type="EC" id="3.4.23.36"/>
    </reaction>
</comment>
<comment type="pathway">
    <text evidence="1">Protein modification; lipoprotein biosynthesis (signal peptide cleavage).</text>
</comment>
<comment type="subcellular location">
    <subcellularLocation>
        <location evidence="1">Cell inner membrane</location>
        <topology evidence="1">Multi-pass membrane protein</topology>
    </subcellularLocation>
</comment>
<comment type="similarity">
    <text evidence="1">Belongs to the peptidase A8 family.</text>
</comment>
<dbReference type="EC" id="3.4.23.36" evidence="1"/>
<dbReference type="EMBL" id="BA000039">
    <property type="protein sequence ID" value="BAC09972.1"/>
    <property type="molecule type" value="Genomic_DNA"/>
</dbReference>
<dbReference type="RefSeq" id="NP_683210.1">
    <property type="nucleotide sequence ID" value="NC_004113.1"/>
</dbReference>
<dbReference type="RefSeq" id="WP_011058252.1">
    <property type="nucleotide sequence ID" value="NC_004113.1"/>
</dbReference>
<dbReference type="SMR" id="Q8DGA3"/>
<dbReference type="STRING" id="197221.gene:10749040"/>
<dbReference type="EnsemblBacteria" id="BAC09972">
    <property type="protein sequence ID" value="BAC09972"/>
    <property type="gene ID" value="BAC09972"/>
</dbReference>
<dbReference type="KEGG" id="tel:tlr2420"/>
<dbReference type="PATRIC" id="fig|197221.4.peg.2543"/>
<dbReference type="eggNOG" id="COG0597">
    <property type="taxonomic scope" value="Bacteria"/>
</dbReference>
<dbReference type="UniPathway" id="UPA00665"/>
<dbReference type="Proteomes" id="UP000000440">
    <property type="component" value="Chromosome"/>
</dbReference>
<dbReference type="GO" id="GO:0005886">
    <property type="term" value="C:plasma membrane"/>
    <property type="evidence" value="ECO:0007669"/>
    <property type="project" value="UniProtKB-SubCell"/>
</dbReference>
<dbReference type="GO" id="GO:0004190">
    <property type="term" value="F:aspartic-type endopeptidase activity"/>
    <property type="evidence" value="ECO:0007669"/>
    <property type="project" value="UniProtKB-UniRule"/>
</dbReference>
<dbReference type="GO" id="GO:0006508">
    <property type="term" value="P:proteolysis"/>
    <property type="evidence" value="ECO:0007669"/>
    <property type="project" value="UniProtKB-KW"/>
</dbReference>
<dbReference type="HAMAP" id="MF_00161">
    <property type="entry name" value="LspA"/>
    <property type="match status" value="1"/>
</dbReference>
<dbReference type="InterPro" id="IPR001872">
    <property type="entry name" value="Peptidase_A8"/>
</dbReference>
<dbReference type="NCBIfam" id="TIGR00077">
    <property type="entry name" value="lspA"/>
    <property type="match status" value="1"/>
</dbReference>
<dbReference type="PANTHER" id="PTHR33695">
    <property type="entry name" value="LIPOPROTEIN SIGNAL PEPTIDASE"/>
    <property type="match status" value="1"/>
</dbReference>
<dbReference type="PANTHER" id="PTHR33695:SF1">
    <property type="entry name" value="LIPOPROTEIN SIGNAL PEPTIDASE"/>
    <property type="match status" value="1"/>
</dbReference>
<dbReference type="Pfam" id="PF01252">
    <property type="entry name" value="Peptidase_A8"/>
    <property type="match status" value="1"/>
</dbReference>
<dbReference type="PRINTS" id="PR00781">
    <property type="entry name" value="LIPOSIGPTASE"/>
</dbReference>
<dbReference type="PROSITE" id="PS00855">
    <property type="entry name" value="SPASE_II"/>
    <property type="match status" value="1"/>
</dbReference>
<proteinExistence type="inferred from homology"/>
<sequence>MSSRHFKIKNSLFWWVAGLALASDRLTKAWIVATYALTVPPQTTPIIPGVFHITYVTNTGAAFSLFANGSIWLRWLSLIVSLGLITWAILGPRLDRWQQVGYGCLLGGALGNGIDRFLTGEVVDFLDFRWIQFPVFNVADIAINIGIVCLLWSAWHPR</sequence>
<keyword id="KW-0064">Aspartyl protease</keyword>
<keyword id="KW-0997">Cell inner membrane</keyword>
<keyword id="KW-1003">Cell membrane</keyword>
<keyword id="KW-0378">Hydrolase</keyword>
<keyword id="KW-0472">Membrane</keyword>
<keyword id="KW-0645">Protease</keyword>
<keyword id="KW-1185">Reference proteome</keyword>
<keyword id="KW-0812">Transmembrane</keyword>
<keyword id="KW-1133">Transmembrane helix</keyword>